<reference key="1">
    <citation type="journal article" date="2005" name="Science">
        <title>Extensive DNA inversions in the B. fragilis genome control variable gene expression.</title>
        <authorList>
            <person name="Cerdeno-Tarraga A.-M."/>
            <person name="Patrick S."/>
            <person name="Crossman L.C."/>
            <person name="Blakely G."/>
            <person name="Abratt V."/>
            <person name="Lennard N."/>
            <person name="Poxton I."/>
            <person name="Duerden B."/>
            <person name="Harris B."/>
            <person name="Quail M.A."/>
            <person name="Barron A."/>
            <person name="Clark L."/>
            <person name="Corton C."/>
            <person name="Doggett J."/>
            <person name="Holden M.T.G."/>
            <person name="Larke N."/>
            <person name="Line A."/>
            <person name="Lord A."/>
            <person name="Norbertczak H."/>
            <person name="Ormond D."/>
            <person name="Price C."/>
            <person name="Rabbinowitsch E."/>
            <person name="Woodward J."/>
            <person name="Barrell B.G."/>
            <person name="Parkhill J."/>
        </authorList>
    </citation>
    <scope>NUCLEOTIDE SEQUENCE [LARGE SCALE GENOMIC DNA]</scope>
    <source>
        <strain>ATCC 25285 / DSM 2151 / CCUG 4856 / JCM 11019 / LMG 10263 / NCTC 9343 / Onslow / VPI 2553 / EN-2</strain>
    </source>
</reference>
<organism>
    <name type="scientific">Bacteroides fragilis (strain ATCC 25285 / DSM 2151 / CCUG 4856 / JCM 11019 / LMG 10263 / NCTC 9343 / Onslow / VPI 2553 / EN-2)</name>
    <dbReference type="NCBI Taxonomy" id="272559"/>
    <lineage>
        <taxon>Bacteria</taxon>
        <taxon>Pseudomonadati</taxon>
        <taxon>Bacteroidota</taxon>
        <taxon>Bacteroidia</taxon>
        <taxon>Bacteroidales</taxon>
        <taxon>Bacteroidaceae</taxon>
        <taxon>Bacteroides</taxon>
    </lineage>
</organism>
<accession>Q5L8W7</accession>
<evidence type="ECO:0000255" key="1">
    <source>
        <dbReference type="HAMAP-Rule" id="MF_00291"/>
    </source>
</evidence>
<evidence type="ECO:0000256" key="2">
    <source>
        <dbReference type="SAM" id="MobiDB-lite"/>
    </source>
</evidence>
<evidence type="ECO:0000305" key="3"/>
<dbReference type="EMBL" id="CR626927">
    <property type="protein sequence ID" value="CAH09465.1"/>
    <property type="molecule type" value="Genomic_DNA"/>
</dbReference>
<dbReference type="RefSeq" id="WP_005791748.1">
    <property type="nucleotide sequence ID" value="NZ_UFTH01000001.1"/>
</dbReference>
<dbReference type="SMR" id="Q5L8W7"/>
<dbReference type="PaxDb" id="272559-BF9343_3684"/>
<dbReference type="GeneID" id="60369975"/>
<dbReference type="KEGG" id="bfs:BF9343_3684"/>
<dbReference type="eggNOG" id="COG0052">
    <property type="taxonomic scope" value="Bacteria"/>
</dbReference>
<dbReference type="HOGENOM" id="CLU_040318_0_2_10"/>
<dbReference type="Proteomes" id="UP000006731">
    <property type="component" value="Chromosome"/>
</dbReference>
<dbReference type="GO" id="GO:0022627">
    <property type="term" value="C:cytosolic small ribosomal subunit"/>
    <property type="evidence" value="ECO:0007669"/>
    <property type="project" value="TreeGrafter"/>
</dbReference>
<dbReference type="GO" id="GO:0003735">
    <property type="term" value="F:structural constituent of ribosome"/>
    <property type="evidence" value="ECO:0007669"/>
    <property type="project" value="InterPro"/>
</dbReference>
<dbReference type="GO" id="GO:0006412">
    <property type="term" value="P:translation"/>
    <property type="evidence" value="ECO:0007669"/>
    <property type="project" value="UniProtKB-UniRule"/>
</dbReference>
<dbReference type="CDD" id="cd01425">
    <property type="entry name" value="RPS2"/>
    <property type="match status" value="1"/>
</dbReference>
<dbReference type="FunFam" id="1.10.287.610:FF:000001">
    <property type="entry name" value="30S ribosomal protein S2"/>
    <property type="match status" value="1"/>
</dbReference>
<dbReference type="Gene3D" id="3.40.50.10490">
    <property type="entry name" value="Glucose-6-phosphate isomerase like protein, domain 1"/>
    <property type="match status" value="1"/>
</dbReference>
<dbReference type="Gene3D" id="1.10.287.610">
    <property type="entry name" value="Helix hairpin bin"/>
    <property type="match status" value="1"/>
</dbReference>
<dbReference type="HAMAP" id="MF_00291_B">
    <property type="entry name" value="Ribosomal_uS2_B"/>
    <property type="match status" value="1"/>
</dbReference>
<dbReference type="InterPro" id="IPR001865">
    <property type="entry name" value="Ribosomal_uS2"/>
</dbReference>
<dbReference type="InterPro" id="IPR005706">
    <property type="entry name" value="Ribosomal_uS2_bac/mit/plastid"/>
</dbReference>
<dbReference type="InterPro" id="IPR018130">
    <property type="entry name" value="Ribosomal_uS2_CS"/>
</dbReference>
<dbReference type="InterPro" id="IPR023591">
    <property type="entry name" value="Ribosomal_uS2_flav_dom_sf"/>
</dbReference>
<dbReference type="NCBIfam" id="TIGR01011">
    <property type="entry name" value="rpsB_bact"/>
    <property type="match status" value="1"/>
</dbReference>
<dbReference type="PANTHER" id="PTHR12534">
    <property type="entry name" value="30S RIBOSOMAL PROTEIN S2 PROKARYOTIC AND ORGANELLAR"/>
    <property type="match status" value="1"/>
</dbReference>
<dbReference type="PANTHER" id="PTHR12534:SF0">
    <property type="entry name" value="SMALL RIBOSOMAL SUBUNIT PROTEIN US2M"/>
    <property type="match status" value="1"/>
</dbReference>
<dbReference type="Pfam" id="PF00318">
    <property type="entry name" value="Ribosomal_S2"/>
    <property type="match status" value="1"/>
</dbReference>
<dbReference type="PRINTS" id="PR00395">
    <property type="entry name" value="RIBOSOMALS2"/>
</dbReference>
<dbReference type="SUPFAM" id="SSF52313">
    <property type="entry name" value="Ribosomal protein S2"/>
    <property type="match status" value="1"/>
</dbReference>
<dbReference type="PROSITE" id="PS00963">
    <property type="entry name" value="RIBOSOMAL_S2_2"/>
    <property type="match status" value="1"/>
</dbReference>
<proteinExistence type="inferred from homology"/>
<feature type="chain" id="PRO_1000003892" description="Small ribosomal subunit protein uS2">
    <location>
        <begin position="1"/>
        <end position="278"/>
    </location>
</feature>
<feature type="region of interest" description="Disordered" evidence="2">
    <location>
        <begin position="233"/>
        <end position="258"/>
    </location>
</feature>
<keyword id="KW-0687">Ribonucleoprotein</keyword>
<keyword id="KW-0689">Ribosomal protein</keyword>
<comment type="similarity">
    <text evidence="1">Belongs to the universal ribosomal protein uS2 family.</text>
</comment>
<gene>
    <name evidence="1" type="primary">rpsB</name>
    <name type="ordered locus">BF3785</name>
</gene>
<sequence length="278" mass="30525">MSRTNFDTLLEAGCHFGHLKRKWNPAMAPYIFMERNGIHIIDLHKTVAKVDEAAEALKQIAKSGKKVLFVATKKQAKQVVAEKAASVNMPYVIERWPGGMLTNFPTIRKAVKKMTTIDKLTADGTYSNLSKREILQISRQRAKLDKTLGSIADLTRLPSALFVIDVMKENIAVREANRLGIPVFGIVDTNSDPTNIDFVIPANDDATKSVEVILDACCAAMIEGLEERKAEKIDMEAAGEAPANKGKKKSAKARLDKSDEEAINAAKAAAFLKEDEEA</sequence>
<protein>
    <recommendedName>
        <fullName evidence="1">Small ribosomal subunit protein uS2</fullName>
    </recommendedName>
    <alternativeName>
        <fullName evidence="3">30S ribosomal protein S2</fullName>
    </alternativeName>
</protein>
<name>RS2_BACFN</name>